<feature type="chain" id="PRO_0000132731" description="Squamosa promoter-binding-like protein 10">
    <location>
        <begin position="1"/>
        <end position="396"/>
    </location>
</feature>
<feature type="zinc finger region" description="SBP-type" evidence="3">
    <location>
        <begin position="173"/>
        <end position="250"/>
    </location>
</feature>
<feature type="region of interest" description="Disordered" evidence="4">
    <location>
        <begin position="74"/>
        <end position="104"/>
    </location>
</feature>
<feature type="short sequence motif" description="Bipartite nuclear localization signal" evidence="2">
    <location>
        <begin position="233"/>
        <end position="249"/>
    </location>
</feature>
<feature type="compositionally biased region" description="Polar residues" evidence="4">
    <location>
        <begin position="90"/>
        <end position="104"/>
    </location>
</feature>
<feature type="binding site" evidence="3">
    <location>
        <position position="176"/>
    </location>
    <ligand>
        <name>Zn(2+)</name>
        <dbReference type="ChEBI" id="CHEBI:29105"/>
        <label>1</label>
    </ligand>
</feature>
<feature type="binding site" evidence="3">
    <location>
        <position position="181"/>
    </location>
    <ligand>
        <name>Zn(2+)</name>
        <dbReference type="ChEBI" id="CHEBI:29105"/>
        <label>1</label>
    </ligand>
</feature>
<feature type="binding site" evidence="3">
    <location>
        <position position="198"/>
    </location>
    <ligand>
        <name>Zn(2+)</name>
        <dbReference type="ChEBI" id="CHEBI:29105"/>
        <label>1</label>
    </ligand>
</feature>
<feature type="binding site" evidence="3">
    <location>
        <position position="201"/>
    </location>
    <ligand>
        <name>Zn(2+)</name>
        <dbReference type="ChEBI" id="CHEBI:29105"/>
        <label>1</label>
    </ligand>
</feature>
<feature type="binding site" evidence="3">
    <location>
        <position position="217"/>
    </location>
    <ligand>
        <name>Zn(2+)</name>
        <dbReference type="ChEBI" id="CHEBI:29105"/>
        <label>2</label>
    </ligand>
</feature>
<feature type="binding site" evidence="3">
    <location>
        <position position="220"/>
    </location>
    <ligand>
        <name>Zn(2+)</name>
        <dbReference type="ChEBI" id="CHEBI:29105"/>
        <label>2</label>
    </ligand>
</feature>
<feature type="binding site" evidence="3">
    <location>
        <position position="224"/>
    </location>
    <ligand>
        <name>Zn(2+)</name>
        <dbReference type="ChEBI" id="CHEBI:29105"/>
        <label>2</label>
    </ligand>
</feature>
<feature type="binding site" evidence="3">
    <location>
        <position position="236"/>
    </location>
    <ligand>
        <name>Zn(2+)</name>
        <dbReference type="ChEBI" id="CHEBI:29105"/>
        <label>2</label>
    </ligand>
</feature>
<feature type="sequence conflict" description="In Ref. 4; AAL75905." evidence="7" ref="4">
    <original>G</original>
    <variation>R</variation>
    <location>
        <position position="52"/>
    </location>
</feature>
<evidence type="ECO:0000250" key="1"/>
<evidence type="ECO:0000255" key="2"/>
<evidence type="ECO:0000255" key="3">
    <source>
        <dbReference type="PROSITE-ProRule" id="PRU00470"/>
    </source>
</evidence>
<evidence type="ECO:0000256" key="4">
    <source>
        <dbReference type="SAM" id="MobiDB-lite"/>
    </source>
</evidence>
<evidence type="ECO:0000269" key="5">
    <source>
    </source>
</evidence>
<evidence type="ECO:0000269" key="6">
    <source>
    </source>
</evidence>
<evidence type="ECO:0000305" key="7"/>
<evidence type="ECO:0000305" key="8">
    <source>
    </source>
</evidence>
<protein>
    <recommendedName>
        <fullName>Squamosa promoter-binding-like protein 10</fullName>
    </recommendedName>
</protein>
<name>SPL10_ARATH</name>
<organism>
    <name type="scientific">Arabidopsis thaliana</name>
    <name type="common">Mouse-ear cress</name>
    <dbReference type="NCBI Taxonomy" id="3702"/>
    <lineage>
        <taxon>Eukaryota</taxon>
        <taxon>Viridiplantae</taxon>
        <taxon>Streptophyta</taxon>
        <taxon>Embryophyta</taxon>
        <taxon>Tracheophyta</taxon>
        <taxon>Spermatophyta</taxon>
        <taxon>Magnoliopsida</taxon>
        <taxon>eudicotyledons</taxon>
        <taxon>Gunneridae</taxon>
        <taxon>Pentapetalae</taxon>
        <taxon>rosids</taxon>
        <taxon>malvids</taxon>
        <taxon>Brassicales</taxon>
        <taxon>Brassicaceae</taxon>
        <taxon>Camelineae</taxon>
        <taxon>Arabidopsis</taxon>
    </lineage>
</organism>
<accession>Q8S9L0</accession>
<accession>Q2V4K9</accession>
<accession>Q9FZJ9</accession>
<accession>Q9ZW53</accession>
<reference key="1">
    <citation type="journal article" date="1999" name="Gene">
        <title>Molecular characterization of the Arabidopsis SBP-box genes.</title>
        <authorList>
            <person name="Cardon G.H."/>
            <person name="Hoehmann S."/>
            <person name="Klein J."/>
            <person name="Nettesheim K."/>
            <person name="Saedler H."/>
            <person name="Huijser P."/>
        </authorList>
    </citation>
    <scope>NUCLEOTIDE SEQUENCE [GENOMIC DNA / MRNA]</scope>
    <scope>DEVELOPMENTAL STAGE</scope>
    <source>
        <strain>cv. Columbia</strain>
        <tissue>Flower</tissue>
    </source>
</reference>
<reference key="2">
    <citation type="journal article" date="2000" name="Nature">
        <title>Sequence and analysis of chromosome 1 of the plant Arabidopsis thaliana.</title>
        <authorList>
            <person name="Theologis A."/>
            <person name="Ecker J.R."/>
            <person name="Palm C.J."/>
            <person name="Federspiel N.A."/>
            <person name="Kaul S."/>
            <person name="White O."/>
            <person name="Alonso J."/>
            <person name="Altafi H."/>
            <person name="Araujo R."/>
            <person name="Bowman C.L."/>
            <person name="Brooks S.Y."/>
            <person name="Buehler E."/>
            <person name="Chan A."/>
            <person name="Chao Q."/>
            <person name="Chen H."/>
            <person name="Cheuk R.F."/>
            <person name="Chin C.W."/>
            <person name="Chung M.K."/>
            <person name="Conn L."/>
            <person name="Conway A.B."/>
            <person name="Conway A.R."/>
            <person name="Creasy T.H."/>
            <person name="Dewar K."/>
            <person name="Dunn P."/>
            <person name="Etgu P."/>
            <person name="Feldblyum T.V."/>
            <person name="Feng J.-D."/>
            <person name="Fong B."/>
            <person name="Fujii C.Y."/>
            <person name="Gill J.E."/>
            <person name="Goldsmith A.D."/>
            <person name="Haas B."/>
            <person name="Hansen N.F."/>
            <person name="Hughes B."/>
            <person name="Huizar L."/>
            <person name="Hunter J.L."/>
            <person name="Jenkins J."/>
            <person name="Johnson-Hopson C."/>
            <person name="Khan S."/>
            <person name="Khaykin E."/>
            <person name="Kim C.J."/>
            <person name="Koo H.L."/>
            <person name="Kremenetskaia I."/>
            <person name="Kurtz D.B."/>
            <person name="Kwan A."/>
            <person name="Lam B."/>
            <person name="Langin-Hooper S."/>
            <person name="Lee A."/>
            <person name="Lee J.M."/>
            <person name="Lenz C.A."/>
            <person name="Li J.H."/>
            <person name="Li Y.-P."/>
            <person name="Lin X."/>
            <person name="Liu S.X."/>
            <person name="Liu Z.A."/>
            <person name="Luros J.S."/>
            <person name="Maiti R."/>
            <person name="Marziali A."/>
            <person name="Militscher J."/>
            <person name="Miranda M."/>
            <person name="Nguyen M."/>
            <person name="Nierman W.C."/>
            <person name="Osborne B.I."/>
            <person name="Pai G."/>
            <person name="Peterson J."/>
            <person name="Pham P.K."/>
            <person name="Rizzo M."/>
            <person name="Rooney T."/>
            <person name="Rowley D."/>
            <person name="Sakano H."/>
            <person name="Salzberg S.L."/>
            <person name="Schwartz J.R."/>
            <person name="Shinn P."/>
            <person name="Southwick A.M."/>
            <person name="Sun H."/>
            <person name="Tallon L.J."/>
            <person name="Tambunga G."/>
            <person name="Toriumi M.J."/>
            <person name="Town C.D."/>
            <person name="Utterback T."/>
            <person name="Van Aken S."/>
            <person name="Vaysberg M."/>
            <person name="Vysotskaia V.S."/>
            <person name="Walker M."/>
            <person name="Wu D."/>
            <person name="Yu G."/>
            <person name="Fraser C.M."/>
            <person name="Venter J.C."/>
            <person name="Davis R.W."/>
        </authorList>
    </citation>
    <scope>NUCLEOTIDE SEQUENCE [LARGE SCALE GENOMIC DNA]</scope>
    <source>
        <strain>cv. Columbia</strain>
    </source>
</reference>
<reference key="3">
    <citation type="journal article" date="2017" name="Plant J.">
        <title>Araport11: a complete reannotation of the Arabidopsis thaliana reference genome.</title>
        <authorList>
            <person name="Cheng C.Y."/>
            <person name="Krishnakumar V."/>
            <person name="Chan A.P."/>
            <person name="Thibaud-Nissen F."/>
            <person name="Schobel S."/>
            <person name="Town C.D."/>
        </authorList>
    </citation>
    <scope>GENOME REANNOTATION</scope>
    <source>
        <strain>cv. Columbia</strain>
    </source>
</reference>
<reference key="4">
    <citation type="journal article" date="2003" name="Science">
        <title>Empirical analysis of transcriptional activity in the Arabidopsis genome.</title>
        <authorList>
            <person name="Yamada K."/>
            <person name="Lim J."/>
            <person name="Dale J.M."/>
            <person name="Chen H."/>
            <person name="Shinn P."/>
            <person name="Palm C.J."/>
            <person name="Southwick A.M."/>
            <person name="Wu H.C."/>
            <person name="Kim C.J."/>
            <person name="Nguyen M."/>
            <person name="Pham P.K."/>
            <person name="Cheuk R.F."/>
            <person name="Karlin-Newmann G."/>
            <person name="Liu S.X."/>
            <person name="Lam B."/>
            <person name="Sakano H."/>
            <person name="Wu T."/>
            <person name="Yu G."/>
            <person name="Miranda M."/>
            <person name="Quach H.L."/>
            <person name="Tripp M."/>
            <person name="Chang C.H."/>
            <person name="Lee J.M."/>
            <person name="Toriumi M.J."/>
            <person name="Chan M.M."/>
            <person name="Tang C.C."/>
            <person name="Onodera C.S."/>
            <person name="Deng J.M."/>
            <person name="Akiyama K."/>
            <person name="Ansari Y."/>
            <person name="Arakawa T."/>
            <person name="Banh J."/>
            <person name="Banno F."/>
            <person name="Bowser L."/>
            <person name="Brooks S.Y."/>
            <person name="Carninci P."/>
            <person name="Chao Q."/>
            <person name="Choy N."/>
            <person name="Enju A."/>
            <person name="Goldsmith A.D."/>
            <person name="Gurjal M."/>
            <person name="Hansen N.F."/>
            <person name="Hayashizaki Y."/>
            <person name="Johnson-Hopson C."/>
            <person name="Hsuan V.W."/>
            <person name="Iida K."/>
            <person name="Karnes M."/>
            <person name="Khan S."/>
            <person name="Koesema E."/>
            <person name="Ishida J."/>
            <person name="Jiang P.X."/>
            <person name="Jones T."/>
            <person name="Kawai J."/>
            <person name="Kamiya A."/>
            <person name="Meyers C."/>
            <person name="Nakajima M."/>
            <person name="Narusaka M."/>
            <person name="Seki M."/>
            <person name="Sakurai T."/>
            <person name="Satou M."/>
            <person name="Tamse R."/>
            <person name="Vaysberg M."/>
            <person name="Wallender E.K."/>
            <person name="Wong C."/>
            <person name="Yamamura Y."/>
            <person name="Yuan S."/>
            <person name="Shinozaki K."/>
            <person name="Davis R.W."/>
            <person name="Theologis A."/>
            <person name="Ecker J.R."/>
        </authorList>
    </citation>
    <scope>NUCLEOTIDE SEQUENCE [LARGE SCALE MRNA]</scope>
    <source>
        <strain>cv. Columbia</strain>
    </source>
</reference>
<reference key="5">
    <citation type="journal article" date="2002" name="Cell">
        <title>Prediction of plant microRNA targets.</title>
        <authorList>
            <person name="Rhoades M.W."/>
            <person name="Reinhart B.J."/>
            <person name="Lim L.P."/>
            <person name="Burge C.B."/>
            <person name="Bartel B."/>
            <person name="Bartel D.P."/>
        </authorList>
    </citation>
    <scope>INDUCTION</scope>
</reference>
<reference key="6">
    <citation type="journal article" date="2003" name="Development">
        <title>Dissection of floral induction pathways using global expression analysis.</title>
        <authorList>
            <person name="Schmid M."/>
            <person name="Uhlenhaut N.H."/>
            <person name="Godard F."/>
            <person name="Demar M."/>
            <person name="Bressan R."/>
            <person name="Weigel D."/>
            <person name="Lohmann J.U."/>
        </authorList>
    </citation>
    <scope>DEVELOPMENTAL STAGE</scope>
</reference>
<proteinExistence type="evidence at transcript level"/>
<sequence>MDCNMVSSFPWDWENLIMSNQSKTENEKKQQSTEWEFEKGEGIESIVPDFLGFEKVSSGSATSFWHTAVSKSSQSTSINSSSPEDKRCNLASQSSPGDSSSNIDFLQVKPSTALEVPIASAESDLCLKLGKRTYSEEFWGRNNNDLSAVSMNLLTPSVVARKKTKSCGQSMQVPRCQIDGCELDLSSSKDYHRKHRVCETHSKCPKVVVSGLERRFCQQCSRFHAVSEFDEKKRSCRKRLSHHNARRRKPQGVFPLNSERVFDRRQHTSMLWNGLSLNTRSEEKYTWGTTYETKPTQMESGFTLSFQRGNGSEDQLFTGSTLSFSAFQTSGGFSAGKSNIQLPDKGVGECSGGLHESHDFYSALSLLSTTSDSQGIKHTPVAEPPPIFGTFPSHFI</sequence>
<gene>
    <name type="primary">SPL10</name>
    <name type="ordered locus">At1g27370</name>
    <name type="ORF">F17L21.15</name>
</gene>
<keyword id="KW-0238">DNA-binding</keyword>
<keyword id="KW-0479">Metal-binding</keyword>
<keyword id="KW-0539">Nucleus</keyword>
<keyword id="KW-1185">Reference proteome</keyword>
<keyword id="KW-0804">Transcription</keyword>
<keyword id="KW-0805">Transcription regulation</keyword>
<keyword id="KW-0862">Zinc</keyword>
<keyword id="KW-0863">Zinc-finger</keyword>
<dbReference type="EMBL" id="AJ011636">
    <property type="protein sequence ID" value="CAB56588.1"/>
    <property type="molecule type" value="Genomic_DNA"/>
</dbReference>
<dbReference type="EMBL" id="AJ011637">
    <property type="protein sequence ID" value="CAB56589.1"/>
    <property type="molecule type" value="mRNA"/>
</dbReference>
<dbReference type="EMBL" id="AC004557">
    <property type="protein sequence ID" value="AAF99748.1"/>
    <property type="status" value="ALT_INIT"/>
    <property type="molecule type" value="Genomic_DNA"/>
</dbReference>
<dbReference type="EMBL" id="CP002684">
    <property type="protein sequence ID" value="AEE30814.1"/>
    <property type="molecule type" value="Genomic_DNA"/>
</dbReference>
<dbReference type="EMBL" id="CP002684">
    <property type="protein sequence ID" value="AEE30815.1"/>
    <property type="molecule type" value="Genomic_DNA"/>
</dbReference>
<dbReference type="EMBL" id="CP002684">
    <property type="protein sequence ID" value="AEE30816.1"/>
    <property type="molecule type" value="Genomic_DNA"/>
</dbReference>
<dbReference type="EMBL" id="CP002684">
    <property type="protein sequence ID" value="AEE30817.1"/>
    <property type="molecule type" value="Genomic_DNA"/>
</dbReference>
<dbReference type="EMBL" id="CP002684">
    <property type="protein sequence ID" value="ANM61026.1"/>
    <property type="molecule type" value="Genomic_DNA"/>
</dbReference>
<dbReference type="EMBL" id="CP002684">
    <property type="protein sequence ID" value="ANM61027.1"/>
    <property type="molecule type" value="Genomic_DNA"/>
</dbReference>
<dbReference type="EMBL" id="AY074853">
    <property type="protein sequence ID" value="AAL75905.1"/>
    <property type="molecule type" value="mRNA"/>
</dbReference>
<dbReference type="EMBL" id="AY142028">
    <property type="protein sequence ID" value="AAM98292.1"/>
    <property type="molecule type" value="mRNA"/>
</dbReference>
<dbReference type="PIR" id="T52596">
    <property type="entry name" value="T52596"/>
</dbReference>
<dbReference type="RefSeq" id="NP_001031096.2">
    <property type="nucleotide sequence ID" value="NM_001036019.3"/>
</dbReference>
<dbReference type="RefSeq" id="NP_001077605.1">
    <property type="nucleotide sequence ID" value="NM_001084136.1"/>
</dbReference>
<dbReference type="RefSeq" id="NP_001319090.1">
    <property type="nucleotide sequence ID" value="NM_001332754.1"/>
</dbReference>
<dbReference type="RefSeq" id="NP_001323271.1">
    <property type="nucleotide sequence ID" value="NM_001332755.1"/>
</dbReference>
<dbReference type="RefSeq" id="NP_174057.2">
    <property type="nucleotide sequence ID" value="NM_102499.4"/>
</dbReference>
<dbReference type="RefSeq" id="NP_973921.1">
    <property type="nucleotide sequence ID" value="NM_202192.2"/>
</dbReference>
<dbReference type="SMR" id="Q8S9L0"/>
<dbReference type="FunCoup" id="Q8S9L0">
    <property type="interactions" value="4"/>
</dbReference>
<dbReference type="STRING" id="3702.Q8S9L0"/>
<dbReference type="PaxDb" id="3702-AT1G27370.1"/>
<dbReference type="ProteomicsDB" id="228457"/>
<dbReference type="EnsemblPlants" id="AT1G27370.1">
    <property type="protein sequence ID" value="AT1G27370.1"/>
    <property type="gene ID" value="AT1G27370"/>
</dbReference>
<dbReference type="EnsemblPlants" id="AT1G27370.2">
    <property type="protein sequence ID" value="AT1G27370.2"/>
    <property type="gene ID" value="AT1G27370"/>
</dbReference>
<dbReference type="EnsemblPlants" id="AT1G27370.3">
    <property type="protein sequence ID" value="AT1G27370.3"/>
    <property type="gene ID" value="AT1G27370"/>
</dbReference>
<dbReference type="EnsemblPlants" id="AT1G27370.4">
    <property type="protein sequence ID" value="AT1G27370.4"/>
    <property type="gene ID" value="AT1G27370"/>
</dbReference>
<dbReference type="EnsemblPlants" id="AT1G27370.5">
    <property type="protein sequence ID" value="AT1G27370.5"/>
    <property type="gene ID" value="AT1G27370"/>
</dbReference>
<dbReference type="EnsemblPlants" id="AT1G27370.7">
    <property type="protein sequence ID" value="AT1G27370.7"/>
    <property type="gene ID" value="AT1G27370"/>
</dbReference>
<dbReference type="GeneID" id="839626"/>
<dbReference type="Gramene" id="AT1G27370.1">
    <property type="protein sequence ID" value="AT1G27370.1"/>
    <property type="gene ID" value="AT1G27370"/>
</dbReference>
<dbReference type="Gramene" id="AT1G27370.2">
    <property type="protein sequence ID" value="AT1G27370.2"/>
    <property type="gene ID" value="AT1G27370"/>
</dbReference>
<dbReference type="Gramene" id="AT1G27370.3">
    <property type="protein sequence ID" value="AT1G27370.3"/>
    <property type="gene ID" value="AT1G27370"/>
</dbReference>
<dbReference type="Gramene" id="AT1G27370.4">
    <property type="protein sequence ID" value="AT1G27370.4"/>
    <property type="gene ID" value="AT1G27370"/>
</dbReference>
<dbReference type="Gramene" id="AT1G27370.5">
    <property type="protein sequence ID" value="AT1G27370.5"/>
    <property type="gene ID" value="AT1G27370"/>
</dbReference>
<dbReference type="Gramene" id="AT1G27370.7">
    <property type="protein sequence ID" value="AT1G27370.7"/>
    <property type="gene ID" value="AT1G27370"/>
</dbReference>
<dbReference type="KEGG" id="ath:AT1G27370"/>
<dbReference type="Araport" id="AT1G27370"/>
<dbReference type="TAIR" id="AT1G27370">
    <property type="gene designation" value="SPL10"/>
</dbReference>
<dbReference type="eggNOG" id="ENOG502QTXG">
    <property type="taxonomic scope" value="Eukaryota"/>
</dbReference>
<dbReference type="HOGENOM" id="CLU_026055_1_0_1"/>
<dbReference type="InParanoid" id="Q8S9L0"/>
<dbReference type="OrthoDB" id="514967at2759"/>
<dbReference type="PhylomeDB" id="Q8S9L0"/>
<dbReference type="PRO" id="PR:Q8S9L0"/>
<dbReference type="Proteomes" id="UP000006548">
    <property type="component" value="Chromosome 1"/>
</dbReference>
<dbReference type="ExpressionAtlas" id="Q8S9L0">
    <property type="expression patterns" value="baseline and differential"/>
</dbReference>
<dbReference type="GO" id="GO:0005634">
    <property type="term" value="C:nucleus"/>
    <property type="evidence" value="ECO:0000314"/>
    <property type="project" value="TAIR"/>
</dbReference>
<dbReference type="GO" id="GO:0003700">
    <property type="term" value="F:DNA-binding transcription factor activity"/>
    <property type="evidence" value="ECO:0000250"/>
    <property type="project" value="TAIR"/>
</dbReference>
<dbReference type="GO" id="GO:0043565">
    <property type="term" value="F:sequence-specific DNA binding"/>
    <property type="evidence" value="ECO:0000353"/>
    <property type="project" value="TAIR"/>
</dbReference>
<dbReference type="GO" id="GO:0008270">
    <property type="term" value="F:zinc ion binding"/>
    <property type="evidence" value="ECO:0007669"/>
    <property type="project" value="UniProtKB-KW"/>
</dbReference>
<dbReference type="GO" id="GO:0010358">
    <property type="term" value="P:leaf shaping"/>
    <property type="evidence" value="ECO:0000315"/>
    <property type="project" value="TAIR"/>
</dbReference>
<dbReference type="GO" id="GO:0090356">
    <property type="term" value="P:negative regulation of auxin metabolic process"/>
    <property type="evidence" value="ECO:0000315"/>
    <property type="project" value="TAIR"/>
</dbReference>
<dbReference type="GO" id="GO:0045893">
    <property type="term" value="P:positive regulation of DNA-templated transcription"/>
    <property type="evidence" value="ECO:0000314"/>
    <property type="project" value="TAIR"/>
</dbReference>
<dbReference type="GO" id="GO:0006355">
    <property type="term" value="P:regulation of DNA-templated transcription"/>
    <property type="evidence" value="ECO:0000304"/>
    <property type="project" value="TAIR"/>
</dbReference>
<dbReference type="GO" id="GO:0048510">
    <property type="term" value="P:regulation of timing of transition from vegetative to reproductive phase"/>
    <property type="evidence" value="ECO:0000315"/>
    <property type="project" value="TAIR"/>
</dbReference>
<dbReference type="FunFam" id="4.10.1100.10:FF:000001">
    <property type="entry name" value="Squamosa promoter-binding-like protein 14"/>
    <property type="match status" value="1"/>
</dbReference>
<dbReference type="Gene3D" id="4.10.1100.10">
    <property type="entry name" value="Transcription factor, SBP-box domain"/>
    <property type="match status" value="1"/>
</dbReference>
<dbReference type="InterPro" id="IPR044817">
    <property type="entry name" value="SBP-like"/>
</dbReference>
<dbReference type="InterPro" id="IPR004333">
    <property type="entry name" value="SBP_dom"/>
</dbReference>
<dbReference type="InterPro" id="IPR036893">
    <property type="entry name" value="SBP_sf"/>
</dbReference>
<dbReference type="PANTHER" id="PTHR31251:SF95">
    <property type="entry name" value="SQUAMOSA PROMOTER-BINDING-LIKE PROTEIN 10"/>
    <property type="match status" value="1"/>
</dbReference>
<dbReference type="PANTHER" id="PTHR31251">
    <property type="entry name" value="SQUAMOSA PROMOTER-BINDING-LIKE PROTEIN 4"/>
    <property type="match status" value="1"/>
</dbReference>
<dbReference type="Pfam" id="PF03110">
    <property type="entry name" value="SBP"/>
    <property type="match status" value="1"/>
</dbReference>
<dbReference type="SUPFAM" id="SSF103612">
    <property type="entry name" value="SBT domain"/>
    <property type="match status" value="1"/>
</dbReference>
<dbReference type="PROSITE" id="PS51141">
    <property type="entry name" value="ZF_SBP"/>
    <property type="match status" value="1"/>
</dbReference>
<comment type="function">
    <text evidence="1">Trans-acting factor that binds specifically to the consensus nucleotide sequence 5'-TNCGTACAA-3'.</text>
</comment>
<comment type="cofactor">
    <cofactor evidence="1">
        <name>Zn(2+)</name>
        <dbReference type="ChEBI" id="CHEBI:29105"/>
    </cofactor>
    <text evidence="1">Binds 2 Zn(2+) ions per subunit.</text>
</comment>
<comment type="subcellular location">
    <subcellularLocation>
        <location evidence="7">Nucleus</location>
    </subcellularLocation>
</comment>
<comment type="developmental stage">
    <text evidence="5 6">Expressed constitutively during plant development, weak increase during flowering.</text>
</comment>
<comment type="induction">
    <text evidence="8">Negatively regulated by microRNAs miR156 and miR157.</text>
</comment>
<comment type="domain">
    <text>The SBP-type zinc finger is required for the binding to DNA.</text>
</comment>
<comment type="sequence caution" evidence="7">
    <conflict type="erroneous initiation">
        <sequence resource="EMBL-CDS" id="AAF99748"/>
    </conflict>
</comment>